<accession>P65918</accession>
<accession>Q8DZQ3</accession>
<accession>Q8E5F1</accession>
<evidence type="ECO:0000255" key="1">
    <source>
        <dbReference type="HAMAP-Rule" id="MF_01208"/>
    </source>
</evidence>
<protein>
    <recommendedName>
        <fullName evidence="1">Orotate phosphoribosyltransferase</fullName>
        <shortName evidence="1">OPRT</shortName>
        <shortName evidence="1">OPRTase</shortName>
        <ecNumber evidence="1">2.4.2.10</ecNumber>
    </recommendedName>
</protein>
<dbReference type="EC" id="2.4.2.10" evidence="1"/>
<dbReference type="EMBL" id="AE009948">
    <property type="protein sequence ID" value="AAM99928.1"/>
    <property type="molecule type" value="Genomic_DNA"/>
</dbReference>
<dbReference type="RefSeq" id="NP_688056.1">
    <property type="nucleotide sequence ID" value="NC_004116.1"/>
</dbReference>
<dbReference type="RefSeq" id="WP_000362328.1">
    <property type="nucleotide sequence ID" value="NC_004116.1"/>
</dbReference>
<dbReference type="SMR" id="P65918"/>
<dbReference type="STRING" id="208435.SAG1046"/>
<dbReference type="GeneID" id="66885975"/>
<dbReference type="KEGG" id="sag:SAG1046"/>
<dbReference type="PATRIC" id="fig|208435.3.peg.1057"/>
<dbReference type="HOGENOM" id="CLU_074878_1_1_9"/>
<dbReference type="OrthoDB" id="9802134at2"/>
<dbReference type="UniPathway" id="UPA00070">
    <property type="reaction ID" value="UER00119"/>
</dbReference>
<dbReference type="Proteomes" id="UP000000821">
    <property type="component" value="Chromosome"/>
</dbReference>
<dbReference type="GO" id="GO:0000287">
    <property type="term" value="F:magnesium ion binding"/>
    <property type="evidence" value="ECO:0007669"/>
    <property type="project" value="UniProtKB-UniRule"/>
</dbReference>
<dbReference type="GO" id="GO:0004588">
    <property type="term" value="F:orotate phosphoribosyltransferase activity"/>
    <property type="evidence" value="ECO:0007669"/>
    <property type="project" value="UniProtKB-UniRule"/>
</dbReference>
<dbReference type="GO" id="GO:0044205">
    <property type="term" value="P:'de novo' UMP biosynthetic process"/>
    <property type="evidence" value="ECO:0007669"/>
    <property type="project" value="UniProtKB-UniRule"/>
</dbReference>
<dbReference type="GO" id="GO:0019856">
    <property type="term" value="P:pyrimidine nucleobase biosynthetic process"/>
    <property type="evidence" value="ECO:0007669"/>
    <property type="project" value="TreeGrafter"/>
</dbReference>
<dbReference type="CDD" id="cd06223">
    <property type="entry name" value="PRTases_typeI"/>
    <property type="match status" value="1"/>
</dbReference>
<dbReference type="Gene3D" id="3.40.50.2020">
    <property type="match status" value="1"/>
</dbReference>
<dbReference type="HAMAP" id="MF_01208">
    <property type="entry name" value="PyrE"/>
    <property type="match status" value="1"/>
</dbReference>
<dbReference type="InterPro" id="IPR023031">
    <property type="entry name" value="OPRT"/>
</dbReference>
<dbReference type="InterPro" id="IPR004467">
    <property type="entry name" value="Or_phspho_trans_dom"/>
</dbReference>
<dbReference type="InterPro" id="IPR000836">
    <property type="entry name" value="PRibTrfase_dom"/>
</dbReference>
<dbReference type="InterPro" id="IPR029057">
    <property type="entry name" value="PRTase-like"/>
</dbReference>
<dbReference type="NCBIfam" id="TIGR00336">
    <property type="entry name" value="pyrE"/>
    <property type="match status" value="1"/>
</dbReference>
<dbReference type="PANTHER" id="PTHR19278">
    <property type="entry name" value="OROTATE PHOSPHORIBOSYLTRANSFERASE"/>
    <property type="match status" value="1"/>
</dbReference>
<dbReference type="PANTHER" id="PTHR19278:SF9">
    <property type="entry name" value="URIDINE 5'-MONOPHOSPHATE SYNTHASE"/>
    <property type="match status" value="1"/>
</dbReference>
<dbReference type="Pfam" id="PF00156">
    <property type="entry name" value="Pribosyltran"/>
    <property type="match status" value="1"/>
</dbReference>
<dbReference type="SUPFAM" id="SSF53271">
    <property type="entry name" value="PRTase-like"/>
    <property type="match status" value="1"/>
</dbReference>
<dbReference type="PROSITE" id="PS00103">
    <property type="entry name" value="PUR_PYR_PR_TRANSFER"/>
    <property type="match status" value="1"/>
</dbReference>
<name>PYRE_STRA5</name>
<proteinExistence type="inferred from homology"/>
<gene>
    <name evidence="1" type="primary">pyrE</name>
    <name type="ordered locus">SAG1046</name>
</gene>
<reference key="1">
    <citation type="journal article" date="2002" name="Proc. Natl. Acad. Sci. U.S.A.">
        <title>Complete genome sequence and comparative genomic analysis of an emerging human pathogen, serotype V Streptococcus agalactiae.</title>
        <authorList>
            <person name="Tettelin H."/>
            <person name="Masignani V."/>
            <person name="Cieslewicz M.J."/>
            <person name="Eisen J.A."/>
            <person name="Peterson S.N."/>
            <person name="Wessels M.R."/>
            <person name="Paulsen I.T."/>
            <person name="Nelson K.E."/>
            <person name="Margarit I."/>
            <person name="Read T.D."/>
            <person name="Madoff L.C."/>
            <person name="Wolf A.M."/>
            <person name="Beanan M.J."/>
            <person name="Brinkac L.M."/>
            <person name="Daugherty S.C."/>
            <person name="DeBoy R.T."/>
            <person name="Durkin A.S."/>
            <person name="Kolonay J.F."/>
            <person name="Madupu R."/>
            <person name="Lewis M.R."/>
            <person name="Radune D."/>
            <person name="Fedorova N.B."/>
            <person name="Scanlan D."/>
            <person name="Khouri H.M."/>
            <person name="Mulligan S."/>
            <person name="Carty H.A."/>
            <person name="Cline R.T."/>
            <person name="Van Aken S.E."/>
            <person name="Gill J."/>
            <person name="Scarselli M."/>
            <person name="Mora M."/>
            <person name="Iacobini E.T."/>
            <person name="Brettoni C."/>
            <person name="Galli G."/>
            <person name="Mariani M."/>
            <person name="Vegni F."/>
            <person name="Maione D."/>
            <person name="Rinaudo D."/>
            <person name="Rappuoli R."/>
            <person name="Telford J.L."/>
            <person name="Kasper D.L."/>
            <person name="Grandi G."/>
            <person name="Fraser C.M."/>
        </authorList>
    </citation>
    <scope>NUCLEOTIDE SEQUENCE [LARGE SCALE GENOMIC DNA]</scope>
    <source>
        <strain>ATCC BAA-611 / 2603 V/R</strain>
    </source>
</reference>
<keyword id="KW-0328">Glycosyltransferase</keyword>
<keyword id="KW-0460">Magnesium</keyword>
<keyword id="KW-0665">Pyrimidine biosynthesis</keyword>
<keyword id="KW-1185">Reference proteome</keyword>
<keyword id="KW-0808">Transferase</keyword>
<feature type="chain" id="PRO_0000110747" description="Orotate phosphoribosyltransferase">
    <location>
        <begin position="1"/>
        <end position="209"/>
    </location>
</feature>
<feature type="binding site" evidence="1">
    <location>
        <position position="96"/>
    </location>
    <ligand>
        <name>5-phospho-alpha-D-ribose 1-diphosphate</name>
        <dbReference type="ChEBI" id="CHEBI:58017"/>
        <note>ligand shared between dimeric partners</note>
    </ligand>
</feature>
<feature type="binding site" evidence="1">
    <location>
        <position position="100"/>
    </location>
    <ligand>
        <name>5-phospho-alpha-D-ribose 1-diphosphate</name>
        <dbReference type="ChEBI" id="CHEBI:58017"/>
        <note>ligand shared between dimeric partners</note>
    </ligand>
</feature>
<feature type="binding site" evidence="1">
    <location>
        <position position="102"/>
    </location>
    <ligand>
        <name>5-phospho-alpha-D-ribose 1-diphosphate</name>
        <dbReference type="ChEBI" id="CHEBI:58017"/>
        <note>ligand shared between dimeric partners</note>
    </ligand>
</feature>
<feature type="binding site" description="in other chain" evidence="1">
    <location>
        <begin position="122"/>
        <end position="130"/>
    </location>
    <ligand>
        <name>5-phospho-alpha-D-ribose 1-diphosphate</name>
        <dbReference type="ChEBI" id="CHEBI:58017"/>
        <note>ligand shared between dimeric partners</note>
    </ligand>
</feature>
<feature type="binding site" evidence="1">
    <location>
        <position position="126"/>
    </location>
    <ligand>
        <name>orotate</name>
        <dbReference type="ChEBI" id="CHEBI:30839"/>
    </ligand>
</feature>
<sequence>MDLARQIAMELLDIQAVYLRPQQPFTWASGVKSPIYTDNRVTLSYPETRTLIENGFVKQIQKHFPNVDIIAGTATAGIPHGAIIADKMNLPFAYIRSKAKDHGVGNQIEGRVYSGQKMVIIEDLISTGGSVLEAVTAAQSQGIEVLGVVAIFTYQLAKAEQAFREADIPLVTLTDYNQLIKVAKVNGYITADQLVLLKKFKEDQMNWQS</sequence>
<organism>
    <name type="scientific">Streptococcus agalactiae serotype V (strain ATCC BAA-611 / 2603 V/R)</name>
    <dbReference type="NCBI Taxonomy" id="208435"/>
    <lineage>
        <taxon>Bacteria</taxon>
        <taxon>Bacillati</taxon>
        <taxon>Bacillota</taxon>
        <taxon>Bacilli</taxon>
        <taxon>Lactobacillales</taxon>
        <taxon>Streptococcaceae</taxon>
        <taxon>Streptococcus</taxon>
    </lineage>
</organism>
<comment type="function">
    <text evidence="1">Catalyzes the transfer of a ribosyl phosphate group from 5-phosphoribose 1-diphosphate to orotate, leading to the formation of orotidine monophosphate (OMP).</text>
</comment>
<comment type="catalytic activity">
    <reaction evidence="1">
        <text>orotidine 5'-phosphate + diphosphate = orotate + 5-phospho-alpha-D-ribose 1-diphosphate</text>
        <dbReference type="Rhea" id="RHEA:10380"/>
        <dbReference type="ChEBI" id="CHEBI:30839"/>
        <dbReference type="ChEBI" id="CHEBI:33019"/>
        <dbReference type="ChEBI" id="CHEBI:57538"/>
        <dbReference type="ChEBI" id="CHEBI:58017"/>
        <dbReference type="EC" id="2.4.2.10"/>
    </reaction>
</comment>
<comment type="cofactor">
    <cofactor evidence="1">
        <name>Mg(2+)</name>
        <dbReference type="ChEBI" id="CHEBI:18420"/>
    </cofactor>
</comment>
<comment type="pathway">
    <text evidence="1">Pyrimidine metabolism; UMP biosynthesis via de novo pathway; UMP from orotate: step 1/2.</text>
</comment>
<comment type="subunit">
    <text evidence="1">Homodimer.</text>
</comment>
<comment type="similarity">
    <text evidence="1">Belongs to the purine/pyrimidine phosphoribosyltransferase family. PyrE subfamily.</text>
</comment>